<organism>
    <name type="scientific">Rhodospirillum rubrum (strain ATCC 11170 / ATH 1.1.1 / DSM 467 / LMG 4362 / NCIMB 8255 / S1)</name>
    <dbReference type="NCBI Taxonomy" id="269796"/>
    <lineage>
        <taxon>Bacteria</taxon>
        <taxon>Pseudomonadati</taxon>
        <taxon>Pseudomonadota</taxon>
        <taxon>Alphaproteobacteria</taxon>
        <taxon>Rhodospirillales</taxon>
        <taxon>Rhodospirillaceae</taxon>
        <taxon>Rhodospirillum</taxon>
    </lineage>
</organism>
<keyword id="KW-0067">ATP-binding</keyword>
<keyword id="KW-0315">Glutamine amidotransferase</keyword>
<keyword id="KW-0332">GMP biosynthesis</keyword>
<keyword id="KW-0436">Ligase</keyword>
<keyword id="KW-0547">Nucleotide-binding</keyword>
<keyword id="KW-0658">Purine biosynthesis</keyword>
<keyword id="KW-1185">Reference proteome</keyword>
<name>GUAA_RHORT</name>
<accession>Q2RXI5</accession>
<sequence length="525" mass="57029">MTDRTSVSATDRILIIDFGSQVTQLIARRVRESGVYSEIQPFNTVTAASIAAFAPKGVILSGGPASVTAADTPRAPIELFTMGLPVLGICYGQQTMVAQLGGRVEAPDHREFGRAFVEVTAGCALFDGVWTPGERDQVWMSHGDRVDAIPEGFSVVAVSEGAPYAAIADEARHFYGVQFHPEVVHTPKGAALLRNFTHGICGCGGDWTMAAFKDQAIARVREQVGSGRVICGLSGGVDSSVVAALIHEAIGEQLVCVLVDHGMMRQGETEQVVRVFRDRFNITLVHRDASELFLGKLDGVVDPEAKRKIIGATFIDVFDEEARKVGGADFLAQGTLYPDVIESVSFTGGPSVTIKSHHNVGGLPERMKMALVEPLRELFKDEVRDLGRELGLPDEMVGRHPFPGPGLAIRIPGQPLTREKLDILRRADAIYLEEIRNAGLYDVIWQAFAVLLPVRTVGVMGDARSYDFALALRAVTSTDGMTADYYPFDHTFLGRVANRIINEVKGVNRVVYDITSKPPGTIEWE</sequence>
<reference key="1">
    <citation type="journal article" date="2011" name="Stand. Genomic Sci.">
        <title>Complete genome sequence of Rhodospirillum rubrum type strain (S1).</title>
        <authorList>
            <person name="Munk A.C."/>
            <person name="Copeland A."/>
            <person name="Lucas S."/>
            <person name="Lapidus A."/>
            <person name="Del Rio T.G."/>
            <person name="Barry K."/>
            <person name="Detter J.C."/>
            <person name="Hammon N."/>
            <person name="Israni S."/>
            <person name="Pitluck S."/>
            <person name="Brettin T."/>
            <person name="Bruce D."/>
            <person name="Han C."/>
            <person name="Tapia R."/>
            <person name="Gilna P."/>
            <person name="Schmutz J."/>
            <person name="Larimer F."/>
            <person name="Land M."/>
            <person name="Kyrpides N.C."/>
            <person name="Mavromatis K."/>
            <person name="Richardson P."/>
            <person name="Rohde M."/>
            <person name="Goeker M."/>
            <person name="Klenk H.P."/>
            <person name="Zhang Y."/>
            <person name="Roberts G.P."/>
            <person name="Reslewic S."/>
            <person name="Schwartz D.C."/>
        </authorList>
    </citation>
    <scope>NUCLEOTIDE SEQUENCE [LARGE SCALE GENOMIC DNA]</scope>
    <source>
        <strain>ATCC 11170 / ATH 1.1.1 / DSM 467 / LMG 4362 / NCIMB 8255 / S1</strain>
    </source>
</reference>
<dbReference type="EC" id="6.3.5.2" evidence="1"/>
<dbReference type="EMBL" id="CP000230">
    <property type="protein sequence ID" value="ABC21160.1"/>
    <property type="molecule type" value="Genomic_DNA"/>
</dbReference>
<dbReference type="RefSeq" id="WP_011388108.1">
    <property type="nucleotide sequence ID" value="NC_007643.1"/>
</dbReference>
<dbReference type="RefSeq" id="YP_425447.1">
    <property type="nucleotide sequence ID" value="NC_007643.1"/>
</dbReference>
<dbReference type="SMR" id="Q2RXI5"/>
<dbReference type="STRING" id="269796.Rru_A0355"/>
<dbReference type="EnsemblBacteria" id="ABC21160">
    <property type="protein sequence ID" value="ABC21160"/>
    <property type="gene ID" value="Rru_A0355"/>
</dbReference>
<dbReference type="KEGG" id="rru:Rru_A0355"/>
<dbReference type="PATRIC" id="fig|269796.9.peg.410"/>
<dbReference type="eggNOG" id="COG0519">
    <property type="taxonomic scope" value="Bacteria"/>
</dbReference>
<dbReference type="HOGENOM" id="CLU_014340_0_5_5"/>
<dbReference type="PhylomeDB" id="Q2RXI5"/>
<dbReference type="UniPathway" id="UPA00189">
    <property type="reaction ID" value="UER00296"/>
</dbReference>
<dbReference type="Proteomes" id="UP000001929">
    <property type="component" value="Chromosome"/>
</dbReference>
<dbReference type="GO" id="GO:0005829">
    <property type="term" value="C:cytosol"/>
    <property type="evidence" value="ECO:0007669"/>
    <property type="project" value="TreeGrafter"/>
</dbReference>
<dbReference type="GO" id="GO:0005524">
    <property type="term" value="F:ATP binding"/>
    <property type="evidence" value="ECO:0007669"/>
    <property type="project" value="UniProtKB-UniRule"/>
</dbReference>
<dbReference type="GO" id="GO:0003921">
    <property type="term" value="F:GMP synthase activity"/>
    <property type="evidence" value="ECO:0007669"/>
    <property type="project" value="InterPro"/>
</dbReference>
<dbReference type="CDD" id="cd01742">
    <property type="entry name" value="GATase1_GMP_Synthase"/>
    <property type="match status" value="1"/>
</dbReference>
<dbReference type="CDD" id="cd01997">
    <property type="entry name" value="GMP_synthase_C"/>
    <property type="match status" value="1"/>
</dbReference>
<dbReference type="FunFam" id="3.30.300.10:FF:000002">
    <property type="entry name" value="GMP synthase [glutamine-hydrolyzing]"/>
    <property type="match status" value="1"/>
</dbReference>
<dbReference type="FunFam" id="3.40.50.620:FF:000001">
    <property type="entry name" value="GMP synthase [glutamine-hydrolyzing]"/>
    <property type="match status" value="1"/>
</dbReference>
<dbReference type="FunFam" id="3.40.50.880:FF:000001">
    <property type="entry name" value="GMP synthase [glutamine-hydrolyzing]"/>
    <property type="match status" value="1"/>
</dbReference>
<dbReference type="Gene3D" id="3.30.300.10">
    <property type="match status" value="1"/>
</dbReference>
<dbReference type="Gene3D" id="3.40.50.880">
    <property type="match status" value="1"/>
</dbReference>
<dbReference type="Gene3D" id="3.40.50.620">
    <property type="entry name" value="HUPs"/>
    <property type="match status" value="1"/>
</dbReference>
<dbReference type="HAMAP" id="MF_00344">
    <property type="entry name" value="GMP_synthase"/>
    <property type="match status" value="1"/>
</dbReference>
<dbReference type="InterPro" id="IPR029062">
    <property type="entry name" value="Class_I_gatase-like"/>
</dbReference>
<dbReference type="InterPro" id="IPR017926">
    <property type="entry name" value="GATASE"/>
</dbReference>
<dbReference type="InterPro" id="IPR001674">
    <property type="entry name" value="GMP_synth_C"/>
</dbReference>
<dbReference type="InterPro" id="IPR004739">
    <property type="entry name" value="GMP_synth_GATase"/>
</dbReference>
<dbReference type="InterPro" id="IPR022955">
    <property type="entry name" value="GMP_synthase"/>
</dbReference>
<dbReference type="InterPro" id="IPR025777">
    <property type="entry name" value="GMPS_ATP_PPase_dom"/>
</dbReference>
<dbReference type="InterPro" id="IPR022310">
    <property type="entry name" value="NAD/GMP_synthase"/>
</dbReference>
<dbReference type="InterPro" id="IPR014729">
    <property type="entry name" value="Rossmann-like_a/b/a_fold"/>
</dbReference>
<dbReference type="NCBIfam" id="TIGR00884">
    <property type="entry name" value="guaA_Cterm"/>
    <property type="match status" value="1"/>
</dbReference>
<dbReference type="NCBIfam" id="TIGR00888">
    <property type="entry name" value="guaA_Nterm"/>
    <property type="match status" value="1"/>
</dbReference>
<dbReference type="NCBIfam" id="NF000848">
    <property type="entry name" value="PRK00074.1"/>
    <property type="match status" value="1"/>
</dbReference>
<dbReference type="PANTHER" id="PTHR11922:SF2">
    <property type="entry name" value="GMP SYNTHASE [GLUTAMINE-HYDROLYZING]"/>
    <property type="match status" value="1"/>
</dbReference>
<dbReference type="PANTHER" id="PTHR11922">
    <property type="entry name" value="GMP SYNTHASE-RELATED"/>
    <property type="match status" value="1"/>
</dbReference>
<dbReference type="Pfam" id="PF00117">
    <property type="entry name" value="GATase"/>
    <property type="match status" value="1"/>
</dbReference>
<dbReference type="Pfam" id="PF00958">
    <property type="entry name" value="GMP_synt_C"/>
    <property type="match status" value="1"/>
</dbReference>
<dbReference type="Pfam" id="PF02540">
    <property type="entry name" value="NAD_synthase"/>
    <property type="match status" value="1"/>
</dbReference>
<dbReference type="PRINTS" id="PR00097">
    <property type="entry name" value="ANTSNTHASEII"/>
</dbReference>
<dbReference type="PRINTS" id="PR00099">
    <property type="entry name" value="CPSGATASE"/>
</dbReference>
<dbReference type="PRINTS" id="PR00096">
    <property type="entry name" value="GATASE"/>
</dbReference>
<dbReference type="SUPFAM" id="SSF52402">
    <property type="entry name" value="Adenine nucleotide alpha hydrolases-like"/>
    <property type="match status" value="1"/>
</dbReference>
<dbReference type="SUPFAM" id="SSF52317">
    <property type="entry name" value="Class I glutamine amidotransferase-like"/>
    <property type="match status" value="1"/>
</dbReference>
<dbReference type="SUPFAM" id="SSF54810">
    <property type="entry name" value="GMP synthetase C-terminal dimerisation domain"/>
    <property type="match status" value="1"/>
</dbReference>
<dbReference type="PROSITE" id="PS51273">
    <property type="entry name" value="GATASE_TYPE_1"/>
    <property type="match status" value="1"/>
</dbReference>
<dbReference type="PROSITE" id="PS51553">
    <property type="entry name" value="GMPS_ATP_PPASE"/>
    <property type="match status" value="1"/>
</dbReference>
<comment type="function">
    <text evidence="1">Catalyzes the synthesis of GMP from XMP.</text>
</comment>
<comment type="catalytic activity">
    <reaction evidence="1">
        <text>XMP + L-glutamine + ATP + H2O = GMP + L-glutamate + AMP + diphosphate + 2 H(+)</text>
        <dbReference type="Rhea" id="RHEA:11680"/>
        <dbReference type="ChEBI" id="CHEBI:15377"/>
        <dbReference type="ChEBI" id="CHEBI:15378"/>
        <dbReference type="ChEBI" id="CHEBI:29985"/>
        <dbReference type="ChEBI" id="CHEBI:30616"/>
        <dbReference type="ChEBI" id="CHEBI:33019"/>
        <dbReference type="ChEBI" id="CHEBI:57464"/>
        <dbReference type="ChEBI" id="CHEBI:58115"/>
        <dbReference type="ChEBI" id="CHEBI:58359"/>
        <dbReference type="ChEBI" id="CHEBI:456215"/>
        <dbReference type="EC" id="6.3.5.2"/>
    </reaction>
</comment>
<comment type="pathway">
    <text evidence="1">Purine metabolism; GMP biosynthesis; GMP from XMP (L-Gln route): step 1/1.</text>
</comment>
<comment type="subunit">
    <text evidence="1">Homodimer.</text>
</comment>
<feature type="chain" id="PRO_0000229464" description="GMP synthase [glutamine-hydrolyzing]">
    <location>
        <begin position="1"/>
        <end position="525"/>
    </location>
</feature>
<feature type="domain" description="Glutamine amidotransferase type-1" evidence="1">
    <location>
        <begin position="12"/>
        <end position="206"/>
    </location>
</feature>
<feature type="domain" description="GMPS ATP-PPase" evidence="1">
    <location>
        <begin position="207"/>
        <end position="399"/>
    </location>
</feature>
<feature type="active site" description="Nucleophile" evidence="1">
    <location>
        <position position="90"/>
    </location>
</feature>
<feature type="active site" evidence="1">
    <location>
        <position position="180"/>
    </location>
</feature>
<feature type="active site" evidence="1">
    <location>
        <position position="182"/>
    </location>
</feature>
<feature type="binding site" evidence="1">
    <location>
        <begin position="234"/>
        <end position="240"/>
    </location>
    <ligand>
        <name>ATP</name>
        <dbReference type="ChEBI" id="CHEBI:30616"/>
    </ligand>
</feature>
<protein>
    <recommendedName>
        <fullName evidence="1">GMP synthase [glutamine-hydrolyzing]</fullName>
        <ecNumber evidence="1">6.3.5.2</ecNumber>
    </recommendedName>
    <alternativeName>
        <fullName evidence="1">GMP synthetase</fullName>
    </alternativeName>
    <alternativeName>
        <fullName evidence="1">Glutamine amidotransferase</fullName>
    </alternativeName>
</protein>
<proteinExistence type="inferred from homology"/>
<evidence type="ECO:0000255" key="1">
    <source>
        <dbReference type="HAMAP-Rule" id="MF_00344"/>
    </source>
</evidence>
<gene>
    <name evidence="1" type="primary">guaA</name>
    <name type="ordered locus">Rru_A0355</name>
</gene>